<name>GSG1_MOUSE</name>
<organism>
    <name type="scientific">Mus musculus</name>
    <name type="common">Mouse</name>
    <dbReference type="NCBI Taxonomy" id="10090"/>
    <lineage>
        <taxon>Eukaryota</taxon>
        <taxon>Metazoa</taxon>
        <taxon>Chordata</taxon>
        <taxon>Craniata</taxon>
        <taxon>Vertebrata</taxon>
        <taxon>Euteleostomi</taxon>
        <taxon>Mammalia</taxon>
        <taxon>Eutheria</taxon>
        <taxon>Euarchontoglires</taxon>
        <taxon>Glires</taxon>
        <taxon>Rodentia</taxon>
        <taxon>Myomorpha</taxon>
        <taxon>Muroidea</taxon>
        <taxon>Muridae</taxon>
        <taxon>Murinae</taxon>
        <taxon>Mus</taxon>
        <taxon>Mus</taxon>
    </lineage>
</organism>
<keyword id="KW-0025">Alternative splicing</keyword>
<keyword id="KW-0256">Endoplasmic reticulum</keyword>
<keyword id="KW-0472">Membrane</keyword>
<keyword id="KW-1185">Reference proteome</keyword>
<keyword id="KW-0812">Transmembrane</keyword>
<keyword id="KW-1133">Transmembrane helix</keyword>
<sequence>MAKMEFQKGSSDQRTFISAILNMLSLGLSTASLLSSEWFVGTQKVPKPLCGQSLAAKCFDMPMSLDGGIANTSAQEVVQYTWETGDDRFSFLAFRSGMWLSCEETMEEPGEKCRRFIELTPPAQRWLSLGAQTAYIGLQLISFLLLLTDLLLTTNPGCGLKLSAFAAVSLVLSGLLGMVAHMLYSQVFQATANLGPEDWRPHSWNYGWAFYTAWVSFTCCMASAVTTFNMYTRMVLEFKCRHSKSFNTNPSCLAQHHRCFLPPPLTCTTHAGEPLSSCHQYPSHPIRSVSEAIDLYSALQDKEFQQGISQELKEVVEPSVEEQR</sequence>
<protein>
    <recommendedName>
        <fullName>Germ cell-specific gene 1 protein</fullName>
    </recommendedName>
    <alternativeName>
        <fullName>Germ cell-associated protein 1</fullName>
    </alternativeName>
</protein>
<feature type="chain" id="PRO_0000329462" description="Germ cell-specific gene 1 protein">
    <location>
        <begin position="1"/>
        <end position="324"/>
    </location>
</feature>
<feature type="transmembrane region" description="Helical" evidence="1">
    <location>
        <begin position="15"/>
        <end position="35"/>
    </location>
</feature>
<feature type="transmembrane region" description="Helical" evidence="1">
    <location>
        <begin position="127"/>
        <end position="147"/>
    </location>
</feature>
<feature type="transmembrane region" description="Helical" evidence="1">
    <location>
        <begin position="164"/>
        <end position="184"/>
    </location>
</feature>
<feature type="transmembrane region" description="Helical" evidence="1">
    <location>
        <begin position="208"/>
        <end position="228"/>
    </location>
</feature>
<feature type="splice variant" id="VSP_032999" description="In isoform 3." evidence="5">
    <location>
        <begin position="1"/>
        <end position="107"/>
    </location>
</feature>
<feature type="splice variant" id="VSP_032998" description="In isoform 4." evidence="6 7">
    <original>MAKM</original>
    <variation>M</variation>
    <location>
        <begin position="1"/>
        <end position="4"/>
    </location>
</feature>
<feature type="splice variant" id="VSP_033000" description="In isoform 3." evidence="5">
    <original>EPGEKCRRFIELTPPAQR</original>
    <variation>MEKASLLHLPWGPVAKVF</variation>
    <location>
        <begin position="108"/>
        <end position="125"/>
    </location>
</feature>
<feature type="splice variant" id="VSP_033001" description="In isoform 2 and isoform 4." evidence="4 6 7">
    <original>R</original>
    <variation>RGEKGLLEFATLQGSCHPTLRFGGEWLMEKASLLHLPWGPVAKVF</variation>
    <location>
        <position position="125"/>
    </location>
</feature>
<feature type="sequence conflict" description="In Ref. 3; BAC40258." evidence="8" ref="3">
    <original>M</original>
    <variation>I</variation>
    <location>
        <position position="178"/>
    </location>
</feature>
<proteinExistence type="evidence at protein level"/>
<evidence type="ECO:0000255" key="1"/>
<evidence type="ECO:0000269" key="2">
    <source>
    </source>
</evidence>
<evidence type="ECO:0000269" key="3">
    <source>
    </source>
</evidence>
<evidence type="ECO:0000303" key="4">
    <source>
    </source>
</evidence>
<evidence type="ECO:0000303" key="5">
    <source>
    </source>
</evidence>
<evidence type="ECO:0000303" key="6">
    <source>
    </source>
</evidence>
<evidence type="ECO:0000303" key="7">
    <source>
    </source>
</evidence>
<evidence type="ECO:0000305" key="8"/>
<dbReference type="EMBL" id="D87325">
    <property type="protein sequence ID" value="BAA37087.1"/>
    <property type="status" value="ALT_FRAME"/>
    <property type="molecule type" value="mRNA"/>
</dbReference>
<dbReference type="EMBL" id="AK006326">
    <property type="protein sequence ID" value="BAB24527.1"/>
    <property type="molecule type" value="mRNA"/>
</dbReference>
<dbReference type="EMBL" id="AK088285">
    <property type="protein sequence ID" value="BAC40258.1"/>
    <property type="molecule type" value="mRNA"/>
</dbReference>
<dbReference type="EMBL" id="AC122820">
    <property type="status" value="NOT_ANNOTATED_CDS"/>
    <property type="molecule type" value="Genomic_DNA"/>
</dbReference>
<dbReference type="EMBL" id="BC023009">
    <property type="protein sequence ID" value="AAH23009.1"/>
    <property type="status" value="ALT_INIT"/>
    <property type="molecule type" value="mRNA"/>
</dbReference>
<dbReference type="CCDS" id="CCDS39682.1">
    <molecule id="Q8R1W2-2"/>
</dbReference>
<dbReference type="CCDS" id="CCDS39683.1">
    <molecule id="Q8R1W2-4"/>
</dbReference>
<dbReference type="RefSeq" id="NP_001074021.1">
    <molecule id="Q8R1W2-2"/>
    <property type="nucleotide sequence ID" value="NM_001080552.2"/>
</dbReference>
<dbReference type="RefSeq" id="NP_001074022.1">
    <molecule id="Q8R1W2-4"/>
    <property type="nucleotide sequence ID" value="NM_001080553.2"/>
</dbReference>
<dbReference type="RefSeq" id="NP_034482.2">
    <molecule id="Q8R1W2-4"/>
    <property type="nucleotide sequence ID" value="NM_010352.3"/>
</dbReference>
<dbReference type="SMR" id="Q8R1W2"/>
<dbReference type="BioGRID" id="200083">
    <property type="interactions" value="2"/>
</dbReference>
<dbReference type="FunCoup" id="Q8R1W2">
    <property type="interactions" value="337"/>
</dbReference>
<dbReference type="IntAct" id="Q8R1W2">
    <property type="interactions" value="3"/>
</dbReference>
<dbReference type="MINT" id="Q8R1W2"/>
<dbReference type="STRING" id="10090.ENSMUSP00000085022"/>
<dbReference type="iPTMnet" id="Q8R1W2"/>
<dbReference type="PhosphoSitePlus" id="Q8R1W2"/>
<dbReference type="Antibodypedia" id="23587">
    <property type="antibodies" value="134 antibodies from 18 providers"/>
</dbReference>
<dbReference type="DNASU" id="14840"/>
<dbReference type="Ensembl" id="ENSMUST00000087729.12">
    <molecule id="Q8R1W2-2"/>
    <property type="protein sequence ID" value="ENSMUSP00000085022.6"/>
    <property type="gene ID" value="ENSMUSG00000030206.14"/>
</dbReference>
<dbReference type="Ensembl" id="ENSMUST00000111910.4">
    <molecule id="Q8R1W2-4"/>
    <property type="protein sequence ID" value="ENSMUSP00000107541.2"/>
    <property type="gene ID" value="ENSMUSG00000030206.14"/>
</dbReference>
<dbReference type="Ensembl" id="ENSMUST00000111911.9">
    <molecule id="Q8R1W2-4"/>
    <property type="protein sequence ID" value="ENSMUSP00000107542.3"/>
    <property type="gene ID" value="ENSMUSG00000030206.14"/>
</dbReference>
<dbReference type="GeneID" id="14840"/>
<dbReference type="KEGG" id="mmu:14840"/>
<dbReference type="UCSC" id="uc009elj.1">
    <molecule id="Q8R1W2-2"/>
    <property type="organism name" value="mouse"/>
</dbReference>
<dbReference type="UCSC" id="uc009elk.1">
    <molecule id="Q8R1W2-4"/>
    <property type="organism name" value="mouse"/>
</dbReference>
<dbReference type="AGR" id="MGI:1194499"/>
<dbReference type="CTD" id="83445"/>
<dbReference type="MGI" id="MGI:1194499">
    <property type="gene designation" value="Gsg1"/>
</dbReference>
<dbReference type="VEuPathDB" id="HostDB:ENSMUSG00000030206"/>
<dbReference type="GeneTree" id="ENSGT01050000244814"/>
<dbReference type="InParanoid" id="Q8R1W2"/>
<dbReference type="OMA" id="AFYTAWL"/>
<dbReference type="OrthoDB" id="31208at9989"/>
<dbReference type="PhylomeDB" id="Q8R1W2"/>
<dbReference type="TreeFam" id="TF331388"/>
<dbReference type="BioGRID-ORCS" id="14840">
    <property type="hits" value="1 hit in 78 CRISPR screens"/>
</dbReference>
<dbReference type="ChiTaRS" id="Gsg1">
    <property type="organism name" value="mouse"/>
</dbReference>
<dbReference type="PRO" id="PR:Q8R1W2"/>
<dbReference type="Proteomes" id="UP000000589">
    <property type="component" value="Chromosome 6"/>
</dbReference>
<dbReference type="RNAct" id="Q8R1W2">
    <property type="molecule type" value="protein"/>
</dbReference>
<dbReference type="Bgee" id="ENSMUSG00000030206">
    <property type="expression patterns" value="Expressed in seminiferous tubule of testis and 35 other cell types or tissues"/>
</dbReference>
<dbReference type="ExpressionAtlas" id="Q8R1W2">
    <property type="expression patterns" value="baseline and differential"/>
</dbReference>
<dbReference type="GO" id="GO:0005783">
    <property type="term" value="C:endoplasmic reticulum"/>
    <property type="evidence" value="ECO:0000314"/>
    <property type="project" value="MGI"/>
</dbReference>
<dbReference type="GO" id="GO:0005789">
    <property type="term" value="C:endoplasmic reticulum membrane"/>
    <property type="evidence" value="ECO:0007669"/>
    <property type="project" value="UniProtKB-SubCell"/>
</dbReference>
<dbReference type="GO" id="GO:0070063">
    <property type="term" value="F:RNA polymerase binding"/>
    <property type="evidence" value="ECO:0000353"/>
    <property type="project" value="MGI"/>
</dbReference>
<dbReference type="FunFam" id="1.20.140.150:FF:000034">
    <property type="entry name" value="Germ cell associated 1"/>
    <property type="match status" value="1"/>
</dbReference>
<dbReference type="Gene3D" id="1.20.140.150">
    <property type="match status" value="1"/>
</dbReference>
<dbReference type="InterPro" id="IPR012478">
    <property type="entry name" value="GSG-1"/>
</dbReference>
<dbReference type="InterPro" id="IPR050579">
    <property type="entry name" value="PMP-22/EMP/MP20-like"/>
</dbReference>
<dbReference type="PANTHER" id="PTHR10671">
    <property type="entry name" value="EPITHELIAL MEMBRANE PROTEIN-RELATED"/>
    <property type="match status" value="1"/>
</dbReference>
<dbReference type="PANTHER" id="PTHR10671:SF43">
    <property type="entry name" value="GERM CELL-SPECIFIC GENE 1 PROTEIN"/>
    <property type="match status" value="1"/>
</dbReference>
<dbReference type="Pfam" id="PF07803">
    <property type="entry name" value="GSG-1"/>
    <property type="match status" value="1"/>
</dbReference>
<reference key="1">
    <citation type="journal article" date="1994" name="FEBS Lett.">
        <title>Isolation and characterization of cDNA clones specifically expressed in testicular germ cells.</title>
        <authorList>
            <person name="Tanaka H."/>
            <person name="Yoshimura Y."/>
            <person name="Nishina Y."/>
            <person name="Nozaki M."/>
            <person name="Nojima H."/>
            <person name="Nishimune Y."/>
        </authorList>
    </citation>
    <scope>NUCLEOTIDE SEQUENCE [MRNA] (ISOFORM 4)</scope>
    <scope>TISSUE SPECIFICITY</scope>
    <source>
        <strain>C57BL/6J</strain>
        <tissue>Testis</tissue>
    </source>
</reference>
<reference key="2">
    <citation type="journal article" date="1997" name="Mamm. Genome">
        <title>Mapping of six germ-cell-specific genes to mouse chromosomes.</title>
        <authorList>
            <person name="Matsui M."/>
            <person name="Ichihara H."/>
            <person name="Kobayashi S."/>
            <person name="Tanaka H."/>
            <person name="Tsuchida J."/>
            <person name="Nozaki M."/>
            <person name="Yoshimura Y."/>
            <person name="Nojima H."/>
            <person name="Rochelle J.M."/>
            <person name="Nishimune Y."/>
            <person name="Taketo M.M."/>
            <person name="Seldin M.F."/>
        </authorList>
    </citation>
    <scope>NUCLEOTIDE SEQUENCE [MRNA] (ISOFORM 4)</scope>
    <source>
        <strain>C57BL/6J</strain>
        <tissue>Testis</tissue>
    </source>
</reference>
<reference key="3">
    <citation type="journal article" date="2005" name="Science">
        <title>The transcriptional landscape of the mammalian genome.</title>
        <authorList>
            <person name="Carninci P."/>
            <person name="Kasukawa T."/>
            <person name="Katayama S."/>
            <person name="Gough J."/>
            <person name="Frith M.C."/>
            <person name="Maeda N."/>
            <person name="Oyama R."/>
            <person name="Ravasi T."/>
            <person name="Lenhard B."/>
            <person name="Wells C."/>
            <person name="Kodzius R."/>
            <person name="Shimokawa K."/>
            <person name="Bajic V.B."/>
            <person name="Brenner S.E."/>
            <person name="Batalov S."/>
            <person name="Forrest A.R."/>
            <person name="Zavolan M."/>
            <person name="Davis M.J."/>
            <person name="Wilming L.G."/>
            <person name="Aidinis V."/>
            <person name="Allen J.E."/>
            <person name="Ambesi-Impiombato A."/>
            <person name="Apweiler R."/>
            <person name="Aturaliya R.N."/>
            <person name="Bailey T.L."/>
            <person name="Bansal M."/>
            <person name="Baxter L."/>
            <person name="Beisel K.W."/>
            <person name="Bersano T."/>
            <person name="Bono H."/>
            <person name="Chalk A.M."/>
            <person name="Chiu K.P."/>
            <person name="Choudhary V."/>
            <person name="Christoffels A."/>
            <person name="Clutterbuck D.R."/>
            <person name="Crowe M.L."/>
            <person name="Dalla E."/>
            <person name="Dalrymple B.P."/>
            <person name="de Bono B."/>
            <person name="Della Gatta G."/>
            <person name="di Bernardo D."/>
            <person name="Down T."/>
            <person name="Engstrom P."/>
            <person name="Fagiolini M."/>
            <person name="Faulkner G."/>
            <person name="Fletcher C.F."/>
            <person name="Fukushima T."/>
            <person name="Furuno M."/>
            <person name="Futaki S."/>
            <person name="Gariboldi M."/>
            <person name="Georgii-Hemming P."/>
            <person name="Gingeras T.R."/>
            <person name="Gojobori T."/>
            <person name="Green R.E."/>
            <person name="Gustincich S."/>
            <person name="Harbers M."/>
            <person name="Hayashi Y."/>
            <person name="Hensch T.K."/>
            <person name="Hirokawa N."/>
            <person name="Hill D."/>
            <person name="Huminiecki L."/>
            <person name="Iacono M."/>
            <person name="Ikeo K."/>
            <person name="Iwama A."/>
            <person name="Ishikawa T."/>
            <person name="Jakt M."/>
            <person name="Kanapin A."/>
            <person name="Katoh M."/>
            <person name="Kawasawa Y."/>
            <person name="Kelso J."/>
            <person name="Kitamura H."/>
            <person name="Kitano H."/>
            <person name="Kollias G."/>
            <person name="Krishnan S.P."/>
            <person name="Kruger A."/>
            <person name="Kummerfeld S.K."/>
            <person name="Kurochkin I.V."/>
            <person name="Lareau L.F."/>
            <person name="Lazarevic D."/>
            <person name="Lipovich L."/>
            <person name="Liu J."/>
            <person name="Liuni S."/>
            <person name="McWilliam S."/>
            <person name="Madan Babu M."/>
            <person name="Madera M."/>
            <person name="Marchionni L."/>
            <person name="Matsuda H."/>
            <person name="Matsuzawa S."/>
            <person name="Miki H."/>
            <person name="Mignone F."/>
            <person name="Miyake S."/>
            <person name="Morris K."/>
            <person name="Mottagui-Tabar S."/>
            <person name="Mulder N."/>
            <person name="Nakano N."/>
            <person name="Nakauchi H."/>
            <person name="Ng P."/>
            <person name="Nilsson R."/>
            <person name="Nishiguchi S."/>
            <person name="Nishikawa S."/>
            <person name="Nori F."/>
            <person name="Ohara O."/>
            <person name="Okazaki Y."/>
            <person name="Orlando V."/>
            <person name="Pang K.C."/>
            <person name="Pavan W.J."/>
            <person name="Pavesi G."/>
            <person name="Pesole G."/>
            <person name="Petrovsky N."/>
            <person name="Piazza S."/>
            <person name="Reed J."/>
            <person name="Reid J.F."/>
            <person name="Ring B.Z."/>
            <person name="Ringwald M."/>
            <person name="Rost B."/>
            <person name="Ruan Y."/>
            <person name="Salzberg S.L."/>
            <person name="Sandelin A."/>
            <person name="Schneider C."/>
            <person name="Schoenbach C."/>
            <person name="Sekiguchi K."/>
            <person name="Semple C.A."/>
            <person name="Seno S."/>
            <person name="Sessa L."/>
            <person name="Sheng Y."/>
            <person name="Shibata Y."/>
            <person name="Shimada H."/>
            <person name="Shimada K."/>
            <person name="Silva D."/>
            <person name="Sinclair B."/>
            <person name="Sperling S."/>
            <person name="Stupka E."/>
            <person name="Sugiura K."/>
            <person name="Sultana R."/>
            <person name="Takenaka Y."/>
            <person name="Taki K."/>
            <person name="Tammoja K."/>
            <person name="Tan S.L."/>
            <person name="Tang S."/>
            <person name="Taylor M.S."/>
            <person name="Tegner J."/>
            <person name="Teichmann S.A."/>
            <person name="Ueda H.R."/>
            <person name="van Nimwegen E."/>
            <person name="Verardo R."/>
            <person name="Wei C.L."/>
            <person name="Yagi K."/>
            <person name="Yamanishi H."/>
            <person name="Zabarovsky E."/>
            <person name="Zhu S."/>
            <person name="Zimmer A."/>
            <person name="Hide W."/>
            <person name="Bult C."/>
            <person name="Grimmond S.M."/>
            <person name="Teasdale R.D."/>
            <person name="Liu E.T."/>
            <person name="Brusic V."/>
            <person name="Quackenbush J."/>
            <person name="Wahlestedt C."/>
            <person name="Mattick J.S."/>
            <person name="Hume D.A."/>
            <person name="Kai C."/>
            <person name="Sasaki D."/>
            <person name="Tomaru Y."/>
            <person name="Fukuda S."/>
            <person name="Kanamori-Katayama M."/>
            <person name="Suzuki M."/>
            <person name="Aoki J."/>
            <person name="Arakawa T."/>
            <person name="Iida J."/>
            <person name="Imamura K."/>
            <person name="Itoh M."/>
            <person name="Kato T."/>
            <person name="Kawaji H."/>
            <person name="Kawagashira N."/>
            <person name="Kawashima T."/>
            <person name="Kojima M."/>
            <person name="Kondo S."/>
            <person name="Konno H."/>
            <person name="Nakano K."/>
            <person name="Ninomiya N."/>
            <person name="Nishio T."/>
            <person name="Okada M."/>
            <person name="Plessy C."/>
            <person name="Shibata K."/>
            <person name="Shiraki T."/>
            <person name="Suzuki S."/>
            <person name="Tagami M."/>
            <person name="Waki K."/>
            <person name="Watahiki A."/>
            <person name="Okamura-Oho Y."/>
            <person name="Suzuki H."/>
            <person name="Kawai J."/>
            <person name="Hayashizaki Y."/>
        </authorList>
    </citation>
    <scope>NUCLEOTIDE SEQUENCE [LARGE SCALE MRNA] (ISOFORM 3)</scope>
    <source>
        <strain>C57BL/6J</strain>
        <strain>NOD</strain>
        <tissue>Testis</tissue>
        <tissue>Thymus</tissue>
    </source>
</reference>
<reference key="4">
    <citation type="journal article" date="2009" name="PLoS Biol.">
        <title>Lineage-specific biology revealed by a finished genome assembly of the mouse.</title>
        <authorList>
            <person name="Church D.M."/>
            <person name="Goodstadt L."/>
            <person name="Hillier L.W."/>
            <person name="Zody M.C."/>
            <person name="Goldstein S."/>
            <person name="She X."/>
            <person name="Bult C.J."/>
            <person name="Agarwala R."/>
            <person name="Cherry J.L."/>
            <person name="DiCuccio M."/>
            <person name="Hlavina W."/>
            <person name="Kapustin Y."/>
            <person name="Meric P."/>
            <person name="Maglott D."/>
            <person name="Birtle Z."/>
            <person name="Marques A.C."/>
            <person name="Graves T."/>
            <person name="Zhou S."/>
            <person name="Teague B."/>
            <person name="Potamousis K."/>
            <person name="Churas C."/>
            <person name="Place M."/>
            <person name="Herschleb J."/>
            <person name="Runnheim R."/>
            <person name="Forrest D."/>
            <person name="Amos-Landgraf J."/>
            <person name="Schwartz D.C."/>
            <person name="Cheng Z."/>
            <person name="Lindblad-Toh K."/>
            <person name="Eichler E.E."/>
            <person name="Ponting C.P."/>
        </authorList>
    </citation>
    <scope>NUCLEOTIDE SEQUENCE [LARGE SCALE GENOMIC DNA]</scope>
    <source>
        <strain>C57BL/6J</strain>
    </source>
</reference>
<reference key="5">
    <citation type="journal article" date="2004" name="Genome Res.">
        <title>The status, quality, and expansion of the NIH full-length cDNA project: the Mammalian Gene Collection (MGC).</title>
        <authorList>
            <consortium name="The MGC Project Team"/>
        </authorList>
    </citation>
    <scope>NUCLEOTIDE SEQUENCE [LARGE SCALE MRNA] (ISOFORM 2)</scope>
    <source>
        <tissue>Eye</tissue>
    </source>
</reference>
<reference key="6">
    <citation type="journal article" date="2008" name="FEBS Lett.">
        <title>Germ cell-specific gene 1 targets testis-specific poly(A) polymerase to the endoplasmic reticulum through protein-protein interactions.</title>
        <authorList>
            <person name="Choi H.-S."/>
            <person name="Lee S.-H."/>
            <person name="Kim H."/>
            <person name="Lee Y."/>
        </authorList>
    </citation>
    <scope>FUNCTION</scope>
    <scope>INTERACTION WITH PAPOLB</scope>
    <scope>SUBCELLULAR LOCATION</scope>
    <scope>TISSUE SPECIFICITY</scope>
</reference>
<gene>
    <name type="primary">Gsg1</name>
</gene>
<comment type="function">
    <text evidence="2">May cause the redistribution of PAPOLB from the cytosol to the endoplasmic reticulum.</text>
</comment>
<comment type="subunit">
    <text evidence="2">Interacts with PAPOLB.</text>
</comment>
<comment type="interaction">
    <interactant intactId="EBI-7842142">
        <id>Q8R1W2</id>
    </interactant>
    <interactant intactId="EBI-7842113">
        <id>Q9WVP6</id>
        <label>Papolb</label>
    </interactant>
    <organismsDiffer>false</organismsDiffer>
    <experiments>8</experiments>
</comment>
<comment type="subcellular location">
    <subcellularLocation>
        <location evidence="2">Endoplasmic reticulum membrane</location>
        <topology evidence="2">Multi-pass membrane protein</topology>
    </subcellularLocation>
    <text>Colocalizes with PAPOLB in the endoplasmic reticulum.</text>
</comment>
<comment type="alternative products">
    <event type="alternative splicing"/>
    <isoform>
        <id>Q8R1W2-1</id>
        <name>1</name>
        <sequence type="displayed"/>
    </isoform>
    <isoform>
        <id>Q8R1W2-2</id>
        <name>2</name>
        <sequence type="described" ref="VSP_033001"/>
    </isoform>
    <isoform>
        <id>Q8R1W2-3</id>
        <name>3</name>
        <sequence type="described" ref="VSP_032999 VSP_033000"/>
    </isoform>
    <isoform>
        <id>Q8R1W2-4</id>
        <name>4</name>
        <sequence type="described" ref="VSP_032998 VSP_033001"/>
    </isoform>
</comment>
<comment type="tissue specificity">
    <text evidence="2 3">Expressed in spermatogenic cells (at protein level). Expressed in germ cells within the testis from day 21 onwards.</text>
</comment>
<comment type="similarity">
    <text evidence="8">Belongs to the GSG1 family.</text>
</comment>
<comment type="sequence caution" evidence="8">
    <conflict type="erroneous initiation">
        <sequence resource="EMBL-CDS" id="AAH23009"/>
    </conflict>
</comment>
<comment type="sequence caution" evidence="8">
    <conflict type="frameshift">
        <sequence resource="EMBL-CDS" id="BAA37087"/>
    </conflict>
</comment>
<accession>Q8R1W2</accession>
<accession>Q8C2N5</accession>
<accession>Q9D9Z3</accession>
<accession>Q9Z1H7</accession>